<keyword id="KW-0066">ATP synthesis</keyword>
<keyword id="KW-0067">ATP-binding</keyword>
<keyword id="KW-1003">Cell membrane</keyword>
<keyword id="KW-0139">CF(1)</keyword>
<keyword id="KW-0375">Hydrogen ion transport</keyword>
<keyword id="KW-0406">Ion transport</keyword>
<keyword id="KW-0472">Membrane</keyword>
<keyword id="KW-0547">Nucleotide-binding</keyword>
<keyword id="KW-1278">Translocase</keyword>
<keyword id="KW-0813">Transport</keyword>
<dbReference type="EC" id="7.1.2.2" evidence="1"/>
<dbReference type="EMBL" id="CP000919">
    <property type="protein sequence ID" value="ACO18163.1"/>
    <property type="molecule type" value="Genomic_DNA"/>
</dbReference>
<dbReference type="RefSeq" id="WP_000094360.1">
    <property type="nucleotide sequence ID" value="NC_012466.1"/>
</dbReference>
<dbReference type="SMR" id="C1CF93"/>
<dbReference type="GeneID" id="45653253"/>
<dbReference type="KEGG" id="sjj:SPJ_1410"/>
<dbReference type="HOGENOM" id="CLU_022398_0_2_9"/>
<dbReference type="Proteomes" id="UP000002206">
    <property type="component" value="Chromosome"/>
</dbReference>
<dbReference type="GO" id="GO:0005886">
    <property type="term" value="C:plasma membrane"/>
    <property type="evidence" value="ECO:0007669"/>
    <property type="project" value="UniProtKB-SubCell"/>
</dbReference>
<dbReference type="GO" id="GO:0045259">
    <property type="term" value="C:proton-transporting ATP synthase complex"/>
    <property type="evidence" value="ECO:0007669"/>
    <property type="project" value="UniProtKB-KW"/>
</dbReference>
<dbReference type="GO" id="GO:0005524">
    <property type="term" value="F:ATP binding"/>
    <property type="evidence" value="ECO:0007669"/>
    <property type="project" value="UniProtKB-UniRule"/>
</dbReference>
<dbReference type="GO" id="GO:0016887">
    <property type="term" value="F:ATP hydrolysis activity"/>
    <property type="evidence" value="ECO:0007669"/>
    <property type="project" value="InterPro"/>
</dbReference>
<dbReference type="GO" id="GO:0046933">
    <property type="term" value="F:proton-transporting ATP synthase activity, rotational mechanism"/>
    <property type="evidence" value="ECO:0007669"/>
    <property type="project" value="UniProtKB-UniRule"/>
</dbReference>
<dbReference type="CDD" id="cd18110">
    <property type="entry name" value="ATP-synt_F1_beta_C"/>
    <property type="match status" value="1"/>
</dbReference>
<dbReference type="CDD" id="cd18115">
    <property type="entry name" value="ATP-synt_F1_beta_N"/>
    <property type="match status" value="1"/>
</dbReference>
<dbReference type="CDD" id="cd01133">
    <property type="entry name" value="F1-ATPase_beta_CD"/>
    <property type="match status" value="1"/>
</dbReference>
<dbReference type="FunFam" id="1.10.1140.10:FF:000001">
    <property type="entry name" value="ATP synthase subunit beta"/>
    <property type="match status" value="1"/>
</dbReference>
<dbReference type="FunFam" id="2.40.10.170:FF:000005">
    <property type="entry name" value="ATP synthase subunit beta"/>
    <property type="match status" value="1"/>
</dbReference>
<dbReference type="FunFam" id="3.40.50.300:FF:000004">
    <property type="entry name" value="ATP synthase subunit beta"/>
    <property type="match status" value="1"/>
</dbReference>
<dbReference type="Gene3D" id="2.40.10.170">
    <property type="match status" value="1"/>
</dbReference>
<dbReference type="Gene3D" id="1.10.1140.10">
    <property type="entry name" value="Bovine Mitochondrial F1-atpase, Atp Synthase Beta Chain, Chain D, domain 3"/>
    <property type="match status" value="1"/>
</dbReference>
<dbReference type="Gene3D" id="3.40.50.300">
    <property type="entry name" value="P-loop containing nucleotide triphosphate hydrolases"/>
    <property type="match status" value="1"/>
</dbReference>
<dbReference type="HAMAP" id="MF_01347">
    <property type="entry name" value="ATP_synth_beta_bact"/>
    <property type="match status" value="1"/>
</dbReference>
<dbReference type="InterPro" id="IPR003593">
    <property type="entry name" value="AAA+_ATPase"/>
</dbReference>
<dbReference type="InterPro" id="IPR055190">
    <property type="entry name" value="ATP-synt_VA_C"/>
</dbReference>
<dbReference type="InterPro" id="IPR005722">
    <property type="entry name" value="ATP_synth_F1_bsu"/>
</dbReference>
<dbReference type="InterPro" id="IPR020003">
    <property type="entry name" value="ATPase_a/bsu_AS"/>
</dbReference>
<dbReference type="InterPro" id="IPR050053">
    <property type="entry name" value="ATPase_alpha/beta_chains"/>
</dbReference>
<dbReference type="InterPro" id="IPR004100">
    <property type="entry name" value="ATPase_F1/V1/A1_a/bsu_N"/>
</dbReference>
<dbReference type="InterPro" id="IPR036121">
    <property type="entry name" value="ATPase_F1/V1/A1_a/bsu_N_sf"/>
</dbReference>
<dbReference type="InterPro" id="IPR000194">
    <property type="entry name" value="ATPase_F1/V1/A1_a/bsu_nucl-bd"/>
</dbReference>
<dbReference type="InterPro" id="IPR024034">
    <property type="entry name" value="ATPase_F1/V1_b/a_C"/>
</dbReference>
<dbReference type="InterPro" id="IPR027417">
    <property type="entry name" value="P-loop_NTPase"/>
</dbReference>
<dbReference type="NCBIfam" id="TIGR01039">
    <property type="entry name" value="atpD"/>
    <property type="match status" value="1"/>
</dbReference>
<dbReference type="PANTHER" id="PTHR15184">
    <property type="entry name" value="ATP SYNTHASE"/>
    <property type="match status" value="1"/>
</dbReference>
<dbReference type="PANTHER" id="PTHR15184:SF71">
    <property type="entry name" value="ATP SYNTHASE SUBUNIT BETA, MITOCHONDRIAL"/>
    <property type="match status" value="1"/>
</dbReference>
<dbReference type="Pfam" id="PF00006">
    <property type="entry name" value="ATP-synt_ab"/>
    <property type="match status" value="1"/>
</dbReference>
<dbReference type="Pfam" id="PF02874">
    <property type="entry name" value="ATP-synt_ab_N"/>
    <property type="match status" value="1"/>
</dbReference>
<dbReference type="Pfam" id="PF22919">
    <property type="entry name" value="ATP-synt_VA_C"/>
    <property type="match status" value="1"/>
</dbReference>
<dbReference type="SMART" id="SM00382">
    <property type="entry name" value="AAA"/>
    <property type="match status" value="1"/>
</dbReference>
<dbReference type="SUPFAM" id="SSF47917">
    <property type="entry name" value="C-terminal domain of alpha and beta subunits of F1 ATP synthase"/>
    <property type="match status" value="1"/>
</dbReference>
<dbReference type="SUPFAM" id="SSF50615">
    <property type="entry name" value="N-terminal domain of alpha and beta subunits of F1 ATP synthase"/>
    <property type="match status" value="1"/>
</dbReference>
<dbReference type="SUPFAM" id="SSF52540">
    <property type="entry name" value="P-loop containing nucleoside triphosphate hydrolases"/>
    <property type="match status" value="1"/>
</dbReference>
<dbReference type="PROSITE" id="PS00152">
    <property type="entry name" value="ATPASE_ALPHA_BETA"/>
    <property type="match status" value="1"/>
</dbReference>
<evidence type="ECO:0000255" key="1">
    <source>
        <dbReference type="HAMAP-Rule" id="MF_01347"/>
    </source>
</evidence>
<gene>
    <name evidence="1" type="primary">atpD</name>
    <name type="ordered locus">SPJ_1410</name>
</gene>
<protein>
    <recommendedName>
        <fullName evidence="1">ATP synthase subunit beta</fullName>
        <ecNumber evidence="1">7.1.2.2</ecNumber>
    </recommendedName>
    <alternativeName>
        <fullName evidence="1">ATP synthase F1 sector subunit beta</fullName>
    </alternativeName>
    <alternativeName>
        <fullName evidence="1">F-ATPase subunit beta</fullName>
    </alternativeName>
</protein>
<organism>
    <name type="scientific">Streptococcus pneumoniae (strain JJA)</name>
    <dbReference type="NCBI Taxonomy" id="488222"/>
    <lineage>
        <taxon>Bacteria</taxon>
        <taxon>Bacillati</taxon>
        <taxon>Bacillota</taxon>
        <taxon>Bacilli</taxon>
        <taxon>Lactobacillales</taxon>
        <taxon>Streptococcaceae</taxon>
        <taxon>Streptococcus</taxon>
    </lineage>
</organism>
<feature type="chain" id="PRO_1000166608" description="ATP synthase subunit beta">
    <location>
        <begin position="1"/>
        <end position="468"/>
    </location>
</feature>
<feature type="binding site" evidence="1">
    <location>
        <begin position="155"/>
        <end position="162"/>
    </location>
    <ligand>
        <name>ATP</name>
        <dbReference type="ChEBI" id="CHEBI:30616"/>
    </ligand>
</feature>
<reference key="1">
    <citation type="journal article" date="2010" name="Genome Biol.">
        <title>Structure and dynamics of the pan-genome of Streptococcus pneumoniae and closely related species.</title>
        <authorList>
            <person name="Donati C."/>
            <person name="Hiller N.L."/>
            <person name="Tettelin H."/>
            <person name="Muzzi A."/>
            <person name="Croucher N.J."/>
            <person name="Angiuoli S.V."/>
            <person name="Oggioni M."/>
            <person name="Dunning Hotopp J.C."/>
            <person name="Hu F.Z."/>
            <person name="Riley D.R."/>
            <person name="Covacci A."/>
            <person name="Mitchell T.J."/>
            <person name="Bentley S.D."/>
            <person name="Kilian M."/>
            <person name="Ehrlich G.D."/>
            <person name="Rappuoli R."/>
            <person name="Moxon E.R."/>
            <person name="Masignani V."/>
        </authorList>
    </citation>
    <scope>NUCLEOTIDE SEQUENCE [LARGE SCALE GENOMIC DNA]</scope>
    <source>
        <strain>JJA</strain>
    </source>
</reference>
<accession>C1CF93</accession>
<name>ATPB_STRZJ</name>
<proteinExistence type="inferred from homology"/>
<comment type="function">
    <text evidence="1">Produces ATP from ADP in the presence of a proton gradient across the membrane. The catalytic sites are hosted primarily by the beta subunits.</text>
</comment>
<comment type="catalytic activity">
    <reaction evidence="1">
        <text>ATP + H2O + 4 H(+)(in) = ADP + phosphate + 5 H(+)(out)</text>
        <dbReference type="Rhea" id="RHEA:57720"/>
        <dbReference type="ChEBI" id="CHEBI:15377"/>
        <dbReference type="ChEBI" id="CHEBI:15378"/>
        <dbReference type="ChEBI" id="CHEBI:30616"/>
        <dbReference type="ChEBI" id="CHEBI:43474"/>
        <dbReference type="ChEBI" id="CHEBI:456216"/>
        <dbReference type="EC" id="7.1.2.2"/>
    </reaction>
</comment>
<comment type="subunit">
    <text evidence="1">F-type ATPases have 2 components, CF(1) - the catalytic core - and CF(0) - the membrane proton channel. CF(1) has five subunits: alpha(3), beta(3), gamma(1), delta(1), epsilon(1). CF(0) has three main subunits: a(1), b(2) and c(9-12). The alpha and beta chains form an alternating ring which encloses part of the gamma chain. CF(1) is attached to CF(0) by a central stalk formed by the gamma and epsilon chains, while a peripheral stalk is formed by the delta and b chains.</text>
</comment>
<comment type="subcellular location">
    <subcellularLocation>
        <location evidence="1">Cell membrane</location>
        <topology evidence="1">Peripheral membrane protein</topology>
    </subcellularLocation>
</comment>
<comment type="similarity">
    <text evidence="1">Belongs to the ATPase alpha/beta chains family.</text>
</comment>
<sequence>MSSGKIAQVIGPVVDVLFAAGEKLPEINNALVVYKNDERKTKIVLEVALELGDGMVRTIAMESTDGLTRGMEVLDTGRPISVPVGKETLGRVFNVLGDTIDLEAPFTEDAERQPIHKKAPTFDELSTSSEILETGIKVIDLLAPYLKGGKVGLFGGAGVGKTVLIQELIHNIAQEHGGISVFTGVGERTREGNDLYWEMKESGVIEKTAMVFGQMNEPPGARMRVALTGLTIAEYFRDVEGQDVLLFIDNIFRFTQAGSEVSALLGRMPSAVGYQPTLATEMGQLQERITSTKKGSVTSIQAIYVPADDYTDPAPATAFAHLDSTTNLERKLVQLGIYPAVDPLASSSRALAPEIVGEEHYAVAAEVKRVLQRYHELQDIIAILGMDELSDEEKTLVARARRIQFFLSQNFNVAEQFTGQPGSYVPVAETVRGFKEILDGKYDHLPEDAFRGVGSIEDVIAKAEKMGF</sequence>